<feature type="chain" id="PRO_0000456937" description="Necrosis-inducing protein NPP1">
    <location>
        <begin position="1"/>
        <end position="256"/>
    </location>
</feature>
<feature type="short sequence motif" description="Conserved undecapeptide motif" evidence="4">
    <location>
        <begin position="111"/>
        <end position="121"/>
    </location>
</feature>
<feature type="short sequence motif" description="Conserved heptapeptide motif" evidence="4">
    <location>
        <begin position="133"/>
        <end position="139"/>
    </location>
</feature>
<gene>
    <name evidence="2" type="primary">NPP1</name>
</gene>
<accession>B0B0Q6</accession>
<reference key="1">
    <citation type="journal article" date="2019" name="Mol. Biol. Rep.">
        <title>Cloning, characterization, in vitro and in planta expression of a necrosis-inducing Phytophthora protein 1 gene npp1 from Phytophthora cinnamomi.</title>
        <authorList>
            <person name="Martins I.M."/>
            <person name="Meirinho S."/>
            <person name="Costa R."/>
            <person name="Cravador A."/>
            <person name="Choupina A."/>
        </authorList>
    </citation>
    <scope>NUCLEOTIDE SEQUENCE [GENOMIC DNA]</scope>
    <scope>FUNCTION</scope>
    <scope>DOMAIN</scope>
    <scope>INDUCTION</scope>
    <scope>SUBCELLULAR LOCATION</scope>
</reference>
<organism>
    <name type="scientific">Phytophthora cinnamomi</name>
    <name type="common">Cinnamon fungus</name>
    <dbReference type="NCBI Taxonomy" id="4785"/>
    <lineage>
        <taxon>Eukaryota</taxon>
        <taxon>Sar</taxon>
        <taxon>Stramenopiles</taxon>
        <taxon>Oomycota</taxon>
        <taxon>Peronosporales</taxon>
        <taxon>Peronosporaceae</taxon>
        <taxon>Phytophthora</taxon>
    </lineage>
</organism>
<proteinExistence type="evidence at transcript level"/>
<name>NPP1_PHYCI</name>
<dbReference type="EMBL" id="AM403130">
    <property type="protein sequence ID" value="CAL47421.1"/>
    <property type="molecule type" value="Genomic_DNA"/>
</dbReference>
<dbReference type="SMR" id="B0B0Q6"/>
<dbReference type="VEuPathDB" id="FungiDB:IUM83_03907"/>
<dbReference type="GO" id="GO:0005576">
    <property type="term" value="C:extracellular region"/>
    <property type="evidence" value="ECO:0007669"/>
    <property type="project" value="UniProtKB-SubCell"/>
</dbReference>
<dbReference type="InterPro" id="IPR008701">
    <property type="entry name" value="NPP1"/>
</dbReference>
<dbReference type="PANTHER" id="PTHR33657">
    <property type="entry name" value="DOMAIN PROTEIN, PUTATIVE (AFU_ORTHOLOGUE AFUA_5G00600)-RELATED"/>
    <property type="match status" value="1"/>
</dbReference>
<dbReference type="PANTHER" id="PTHR33657:SF8">
    <property type="entry name" value="DOMAIN PROTEIN, PUTATIVE (AFU_ORTHOLOGUE AFUA_5G00600)-RELATED"/>
    <property type="match status" value="1"/>
</dbReference>
<dbReference type="Pfam" id="PF05630">
    <property type="entry name" value="NPP1"/>
    <property type="match status" value="1"/>
</dbReference>
<comment type="function">
    <text evidence="1">Secreted effector that acts as a pathogen-associated molecular pattern (PAMP) recognized by the plant immune system.</text>
</comment>
<comment type="subcellular location">
    <subcellularLocation>
        <location evidence="1">Secreted</location>
    </subcellularLocation>
</comment>
<comment type="induction">
    <text evidence="1">Addition of glucose or sawdust induces a small and progressive increase at 2, 4 and 6 days, and a significant increase of the expression level at 8 days (PubMed:31571106). Expression decreases 12 to 24 hours after infection of Castanea sativa roots and increases again at 36 h, suggesting the existence of a complex mechanism of defense/attack interaction between the pathogen and the host (PubMed:31571106).</text>
</comment>
<comment type="domain">
    <text evidence="4">The structure of NLP effectors is remarkably conserved with a high level of conservation of a central region containing the conserved undecapeptide motif AIMYAWYFPKD and heptapeptide motif GHRHDWE.</text>
</comment>
<comment type="similarity">
    <text evidence="3">Belongs to the Necrosis inducing protein (NPP1) family.</text>
</comment>
<evidence type="ECO:0000269" key="1">
    <source>
    </source>
</evidence>
<evidence type="ECO:0000303" key="2">
    <source>
    </source>
</evidence>
<evidence type="ECO:0000305" key="3"/>
<evidence type="ECO:0000305" key="4">
    <source>
    </source>
</evidence>
<protein>
    <recommendedName>
        <fullName evidence="2">Necrosis-inducing protein NPP1</fullName>
    </recommendedName>
</protein>
<keyword id="KW-0964">Secreted</keyword>
<keyword id="KW-0843">Virulence</keyword>
<sequence length="256" mass="29012">MVSAVLDSRFNVALWIFQRHPKYDVVDALRRCQHRCWEFVDPHPPRMQRQLSSTNLSFHITDGCHPYPAVQADGSVSGGLEWSGADDGDCKGSAWGSQVYARSAWYNNKYAIMYAWYFPKGKGRQHVHKLHSGHRHEWEFAVVWVDQPSADHSNLLGVSMSFGPSFHKEAPVQPEHVVGSSIKLDSYSTFWGAKQGLRVTTDIGTTQDLIQWEQLTDAARASLTETNFDIDEAVVPVEMPLKDDVFQLKLNSTYPF</sequence>